<organism>
    <name type="scientific">Rattus norvegicus</name>
    <name type="common">Rat</name>
    <dbReference type="NCBI Taxonomy" id="10116"/>
    <lineage>
        <taxon>Eukaryota</taxon>
        <taxon>Metazoa</taxon>
        <taxon>Chordata</taxon>
        <taxon>Craniata</taxon>
        <taxon>Vertebrata</taxon>
        <taxon>Euteleostomi</taxon>
        <taxon>Mammalia</taxon>
        <taxon>Eutheria</taxon>
        <taxon>Euarchontoglires</taxon>
        <taxon>Glires</taxon>
        <taxon>Rodentia</taxon>
        <taxon>Myomorpha</taxon>
        <taxon>Muroidea</taxon>
        <taxon>Muridae</taxon>
        <taxon>Murinae</taxon>
        <taxon>Rattus</taxon>
    </lineage>
</organism>
<keyword id="KW-0037">Angiogenesis</keyword>
<keyword id="KW-0068">Autocatalytic cleavage</keyword>
<keyword id="KW-0106">Calcium</keyword>
<keyword id="KW-0177">Collagen degradation</keyword>
<keyword id="KW-1015">Disulfide bond</keyword>
<keyword id="KW-0272">Extracellular matrix</keyword>
<keyword id="KW-0325">Glycoprotein</keyword>
<keyword id="KW-0378">Hydrolase</keyword>
<keyword id="KW-0472">Membrane</keyword>
<keyword id="KW-0479">Metal-binding</keyword>
<keyword id="KW-0482">Metalloprotease</keyword>
<keyword id="KW-0539">Nucleus</keyword>
<keyword id="KW-0597">Phosphoprotein</keyword>
<keyword id="KW-0645">Protease</keyword>
<keyword id="KW-1185">Reference proteome</keyword>
<keyword id="KW-0677">Repeat</keyword>
<keyword id="KW-0964">Secreted</keyword>
<keyword id="KW-0732">Signal</keyword>
<keyword id="KW-0862">Zinc</keyword>
<keyword id="KW-0865">Zymogen</keyword>
<protein>
    <recommendedName>
        <fullName>72 kDa type IV collagenase</fullName>
        <ecNumber evidence="2">3.4.24.24</ecNumber>
    </recommendedName>
    <alternativeName>
        <fullName>72 kDa gelatinase</fullName>
    </alternativeName>
    <alternativeName>
        <fullName>Gelatinase A</fullName>
    </alternativeName>
    <alternativeName>
        <fullName>Matrix metalloproteinase-2</fullName>
        <shortName>MMP-2</shortName>
    </alternativeName>
    <component>
        <recommendedName>
            <fullName>PEX</fullName>
        </recommendedName>
    </component>
</protein>
<sequence length="662" mass="74149">MEARLVWGVLVGPLRVLCVLCCLLGHAIAAPSPIIKFPGDVSPKTDKELAVQYLNTFYGCPKESCNLFVLKDTLKKMQKFFGLPQTGDLDQNTIETMRKPRCGNPDVANYNFFPRKPKWDKNQITYRIIGYTPDLDPETVDDAFARALKVWSDVTPLRFSRIHDGEADIMINFGRWEHGDGYPFDGKDGLLAHAFAPGTGVGGDSHFDDDELWTLGEGQVVRVKYGNADGEYCKFPFLFNGREYSSCTDTGRSDGFLWCSTTYNFEKDGKYGFCPHEALFTMGGNGDGQPCKFPFRFQGTSYNSCTTEGRTDGYRWCGTTEDYDRDKKYGFCPETAMSTVGGNSEGAPCVFPFTFLGNKYESCTSAGRSDGKVWCATTTNYDDDRKWGFCPDQGYSLFLVAAHEFGHAMGLEHSQDPGALMAPIYTYTKNFRLSNDDIKGIQELYGPSPDADTDTGTGPTPTLGPVTPEICKQDIVFDGIAQIRGEIFFFKDRFIWRTVTPRDKPTGPLLVATFWPELPEKIDAVYEAPQEEKAVFFAGNEYWVYSASTLERGYPKPLTSLGLPPDVQQVDAAFNWSKNKKTYIFSGDKFWRYNEVKKKMDPGFPKLIADSWNAIPDNLDAVVDLQGGGHSYFFKGAYYLKLENQSLKSVKFGSIKSDWLGC</sequence>
<feature type="signal peptide" evidence="6">
    <location>
        <begin position="1"/>
        <end position="29"/>
    </location>
</feature>
<feature type="propeptide" id="PRO_0000028720" description="Activation peptide">
    <location>
        <begin position="30"/>
        <end position="109"/>
    </location>
</feature>
<feature type="chain" id="PRO_0000028721" description="72 kDa type IV collagenase">
    <location>
        <begin position="110"/>
        <end position="662"/>
    </location>
</feature>
<feature type="chain" id="PRO_0000391629" description="PEX" evidence="1">
    <location>
        <begin position="445"/>
        <end position="662"/>
    </location>
</feature>
<feature type="domain" description="Fibronectin type-II 1" evidence="4">
    <location>
        <begin position="228"/>
        <end position="276"/>
    </location>
</feature>
<feature type="domain" description="Fibronectin type-II 2" evidence="4">
    <location>
        <begin position="286"/>
        <end position="334"/>
    </location>
</feature>
<feature type="domain" description="Fibronectin type-II 3" evidence="4">
    <location>
        <begin position="344"/>
        <end position="392"/>
    </location>
</feature>
<feature type="repeat" description="Hemopexin 1">
    <location>
        <begin position="474"/>
        <end position="518"/>
    </location>
</feature>
<feature type="repeat" description="Hemopexin 2">
    <location>
        <begin position="519"/>
        <end position="565"/>
    </location>
</feature>
<feature type="repeat" description="Hemopexin 3">
    <location>
        <begin position="567"/>
        <end position="615"/>
    </location>
</feature>
<feature type="repeat" description="Hemopexin 4">
    <location>
        <begin position="616"/>
        <end position="662"/>
    </location>
</feature>
<feature type="region of interest" description="Collagenase-like 1">
    <location>
        <begin position="110"/>
        <end position="221"/>
    </location>
</feature>
<feature type="region of interest" description="Collagen-binding">
    <location>
        <begin position="222"/>
        <end position="396"/>
    </location>
</feature>
<feature type="region of interest" description="Collagenase-like 2">
    <location>
        <begin position="397"/>
        <end position="467"/>
    </location>
</feature>
<feature type="region of interest" description="Required for inhibitor TIMP2 binding" evidence="1">
    <location>
        <begin position="414"/>
        <end position="662"/>
    </location>
</feature>
<feature type="short sequence motif" description="Cysteine switch" evidence="1">
    <location>
        <begin position="100"/>
        <end position="107"/>
    </location>
</feature>
<feature type="active site" evidence="5">
    <location>
        <position position="404"/>
    </location>
</feature>
<feature type="binding site" description="in inhibited form" evidence="2">
    <location>
        <position position="102"/>
    </location>
    <ligand>
        <name>Zn(2+)</name>
        <dbReference type="ChEBI" id="CHEBI:29105"/>
        <label>1</label>
        <note>catalytic</note>
    </ligand>
</feature>
<feature type="binding site" evidence="2">
    <location>
        <position position="134"/>
    </location>
    <ligand>
        <name>Ca(2+)</name>
        <dbReference type="ChEBI" id="CHEBI:29108"/>
        <label>1</label>
    </ligand>
</feature>
<feature type="binding site" evidence="2">
    <location>
        <position position="168"/>
    </location>
    <ligand>
        <name>Ca(2+)</name>
        <dbReference type="ChEBI" id="CHEBI:29108"/>
        <label>2</label>
    </ligand>
</feature>
<feature type="binding site" evidence="2">
    <location>
        <position position="178"/>
    </location>
    <ligand>
        <name>Zn(2+)</name>
        <dbReference type="ChEBI" id="CHEBI:29105"/>
        <label>2</label>
    </ligand>
</feature>
<feature type="binding site" evidence="2">
    <location>
        <position position="180"/>
    </location>
    <ligand>
        <name>Zn(2+)</name>
        <dbReference type="ChEBI" id="CHEBI:29105"/>
        <label>2</label>
    </ligand>
</feature>
<feature type="binding site" evidence="2">
    <location>
        <position position="185"/>
    </location>
    <ligand>
        <name>Ca(2+)</name>
        <dbReference type="ChEBI" id="CHEBI:29108"/>
        <label>3</label>
    </ligand>
</feature>
<feature type="binding site" evidence="2">
    <location>
        <position position="186"/>
    </location>
    <ligand>
        <name>Ca(2+)</name>
        <dbReference type="ChEBI" id="CHEBI:29108"/>
        <label>3</label>
    </ligand>
</feature>
<feature type="binding site" evidence="2">
    <location>
        <position position="193"/>
    </location>
    <ligand>
        <name>Zn(2+)</name>
        <dbReference type="ChEBI" id="CHEBI:29105"/>
        <label>2</label>
    </ligand>
</feature>
<feature type="binding site" evidence="2">
    <location>
        <position position="200"/>
    </location>
    <ligand>
        <name>Ca(2+)</name>
        <dbReference type="ChEBI" id="CHEBI:29108"/>
        <label>2</label>
    </ligand>
</feature>
<feature type="binding site" evidence="2">
    <location>
        <position position="202"/>
    </location>
    <ligand>
        <name>Ca(2+)</name>
        <dbReference type="ChEBI" id="CHEBI:29108"/>
        <label>2</label>
    </ligand>
</feature>
<feature type="binding site" evidence="2">
    <location>
        <position position="204"/>
    </location>
    <ligand>
        <name>Ca(2+)</name>
        <dbReference type="ChEBI" id="CHEBI:29108"/>
        <label>2</label>
    </ligand>
</feature>
<feature type="binding site" evidence="2">
    <location>
        <position position="206"/>
    </location>
    <ligand>
        <name>Zn(2+)</name>
        <dbReference type="ChEBI" id="CHEBI:29105"/>
        <label>2</label>
    </ligand>
</feature>
<feature type="binding site" evidence="2">
    <location>
        <position position="208"/>
    </location>
    <ligand>
        <name>Ca(2+)</name>
        <dbReference type="ChEBI" id="CHEBI:29108"/>
        <label>3</label>
    </ligand>
</feature>
<feature type="binding site" evidence="2">
    <location>
        <position position="209"/>
    </location>
    <ligand>
        <name>Ca(2+)</name>
        <dbReference type="ChEBI" id="CHEBI:29108"/>
        <label>1</label>
    </ligand>
</feature>
<feature type="binding site" evidence="2">
    <location>
        <position position="211"/>
    </location>
    <ligand>
        <name>Ca(2+)</name>
        <dbReference type="ChEBI" id="CHEBI:29108"/>
        <label>1</label>
    </ligand>
</feature>
<feature type="binding site" evidence="2">
    <location>
        <position position="211"/>
    </location>
    <ligand>
        <name>Ca(2+)</name>
        <dbReference type="ChEBI" id="CHEBI:29108"/>
        <label>3</label>
    </ligand>
</feature>
<feature type="binding site" evidence="2">
    <location>
        <position position="403"/>
    </location>
    <ligand>
        <name>Zn(2+)</name>
        <dbReference type="ChEBI" id="CHEBI:29105"/>
        <label>1</label>
        <note>catalytic</note>
    </ligand>
</feature>
<feature type="binding site" evidence="2">
    <location>
        <position position="407"/>
    </location>
    <ligand>
        <name>Zn(2+)</name>
        <dbReference type="ChEBI" id="CHEBI:29105"/>
        <label>1</label>
        <note>catalytic</note>
    </ligand>
</feature>
<feature type="binding site" evidence="2">
    <location>
        <position position="413"/>
    </location>
    <ligand>
        <name>Zn(2+)</name>
        <dbReference type="ChEBI" id="CHEBI:29105"/>
        <label>1</label>
        <note>catalytic</note>
    </ligand>
</feature>
<feature type="binding site" evidence="2">
    <location>
        <position position="478"/>
    </location>
    <ligand>
        <name>Ca(2+)</name>
        <dbReference type="ChEBI" id="CHEBI:29108"/>
        <label>4</label>
    </ligand>
</feature>
<feature type="binding site" evidence="2">
    <location>
        <position position="523"/>
    </location>
    <ligand>
        <name>Ca(2+)</name>
        <dbReference type="ChEBI" id="CHEBI:29108"/>
        <label>4</label>
    </ligand>
</feature>
<feature type="binding site" evidence="2">
    <location>
        <position position="571"/>
    </location>
    <ligand>
        <name>Ca(2+)</name>
        <dbReference type="ChEBI" id="CHEBI:29108"/>
        <label>4</label>
    </ligand>
</feature>
<feature type="binding site" evidence="2">
    <location>
        <position position="620"/>
    </location>
    <ligand>
        <name>Ca(2+)</name>
        <dbReference type="ChEBI" id="CHEBI:29108"/>
        <label>4</label>
    </ligand>
</feature>
<feature type="glycosylation site" description="N-linked (GlcNAc...) asparagine" evidence="3">
    <location>
        <position position="575"/>
    </location>
</feature>
<feature type="glycosylation site" description="N-linked (GlcNAc...) asparagine" evidence="3">
    <location>
        <position position="644"/>
    </location>
</feature>
<feature type="disulfide bond" evidence="4">
    <location>
        <begin position="233"/>
        <end position="259"/>
    </location>
</feature>
<feature type="disulfide bond" evidence="4">
    <location>
        <begin position="247"/>
        <end position="274"/>
    </location>
</feature>
<feature type="disulfide bond" evidence="4">
    <location>
        <begin position="291"/>
        <end position="317"/>
    </location>
</feature>
<feature type="disulfide bond" evidence="4">
    <location>
        <begin position="305"/>
        <end position="332"/>
    </location>
</feature>
<feature type="disulfide bond" evidence="4">
    <location>
        <begin position="349"/>
        <end position="375"/>
    </location>
</feature>
<feature type="disulfide bond" evidence="4">
    <location>
        <begin position="363"/>
        <end position="390"/>
    </location>
</feature>
<feature type="disulfide bond" evidence="4">
    <location>
        <begin position="471"/>
        <end position="662"/>
    </location>
</feature>
<feature type="sequence conflict" description="In Ref. 1; CAA50583." evidence="7" ref="1">
    <original>S</original>
    <variation>A</variation>
    <location>
        <position position="42"/>
    </location>
</feature>
<feature type="sequence conflict" description="In Ref. 1; CAA50583." evidence="7" ref="1">
    <original>G</original>
    <variation>A</variation>
    <location>
        <position position="286"/>
    </location>
</feature>
<feature type="sequence conflict" description="In Ref. 1; CAA50583." evidence="7" ref="1">
    <original>S</original>
    <variation>N</variation>
    <location>
        <position position="369"/>
    </location>
</feature>
<feature type="sequence conflict" description="In Ref. 1; CAA50583." evidence="7" ref="1">
    <original>N</original>
    <variation>H</variation>
    <location>
        <position position="435"/>
    </location>
</feature>
<feature type="sequence conflict" description="In Ref. 1; CAA50583." evidence="7" ref="1">
    <original>S</original>
    <variation>A</variation>
    <location>
        <position position="586"/>
    </location>
</feature>
<name>MMP2_RAT</name>
<proteinExistence type="evidence at protein level"/>
<dbReference type="EC" id="3.4.24.24" evidence="2"/>
<dbReference type="EMBL" id="X71466">
    <property type="protein sequence ID" value="CAA50583.1"/>
    <property type="molecule type" value="mRNA"/>
</dbReference>
<dbReference type="EMBL" id="U65656">
    <property type="protein sequence ID" value="AAB41692.1"/>
    <property type="molecule type" value="mRNA"/>
</dbReference>
<dbReference type="EMBL" id="BC074013">
    <property type="protein sequence ID" value="AAH74013.1"/>
    <property type="molecule type" value="mRNA"/>
</dbReference>
<dbReference type="PIR" id="S34780">
    <property type="entry name" value="S34780"/>
</dbReference>
<dbReference type="RefSeq" id="NP_112316.2">
    <property type="nucleotide sequence ID" value="NM_031054.2"/>
</dbReference>
<dbReference type="SMR" id="P33436"/>
<dbReference type="CORUM" id="P33436"/>
<dbReference type="FunCoup" id="P33436">
    <property type="interactions" value="672"/>
</dbReference>
<dbReference type="STRING" id="10116.ENSRNOP00000022679"/>
<dbReference type="BindingDB" id="P33436"/>
<dbReference type="ChEMBL" id="CHEMBL1075175"/>
<dbReference type="MEROPS" id="M10.003"/>
<dbReference type="GlyCosmos" id="P33436">
    <property type="glycosylation" value="2 sites, No reported glycans"/>
</dbReference>
<dbReference type="GlyGen" id="P33436">
    <property type="glycosylation" value="4 sites"/>
</dbReference>
<dbReference type="PhosphoSitePlus" id="P33436"/>
<dbReference type="PaxDb" id="10116-ENSRNOP00000022679"/>
<dbReference type="Ensembl" id="ENSRNOT00000022679.7">
    <property type="protein sequence ID" value="ENSRNOP00000022679.7"/>
    <property type="gene ID" value="ENSRNOG00000016695.7"/>
</dbReference>
<dbReference type="GeneID" id="81686"/>
<dbReference type="KEGG" id="rno:81686"/>
<dbReference type="AGR" id="RGD:621316"/>
<dbReference type="CTD" id="4313"/>
<dbReference type="RGD" id="621316">
    <property type="gene designation" value="Mmp2"/>
</dbReference>
<dbReference type="eggNOG" id="KOG1565">
    <property type="taxonomic scope" value="Eukaryota"/>
</dbReference>
<dbReference type="GeneTree" id="ENSGT00940000158511"/>
<dbReference type="InParanoid" id="P33436"/>
<dbReference type="OMA" id="CPKDSCN"/>
<dbReference type="OrthoDB" id="406838at2759"/>
<dbReference type="PhylomeDB" id="P33436"/>
<dbReference type="BRENDA" id="3.4.24.24">
    <property type="organism ID" value="5301"/>
</dbReference>
<dbReference type="Reactome" id="R-RNO-1442490">
    <property type="pathway name" value="Collagen degradation"/>
</dbReference>
<dbReference type="Reactome" id="R-RNO-1474228">
    <property type="pathway name" value="Degradation of the extracellular matrix"/>
</dbReference>
<dbReference type="Reactome" id="R-RNO-1592389">
    <property type="pathway name" value="Activation of Matrix Metalloproteinases"/>
</dbReference>
<dbReference type="Reactome" id="R-RNO-381426">
    <property type="pathway name" value="Regulation of Insulin-like Growth Factor (IGF) transport and uptake by Insulin-like Growth Factor Binding Proteins (IGFBPs)"/>
</dbReference>
<dbReference type="Reactome" id="R-RNO-3928665">
    <property type="pathway name" value="EPH-ephrin mediated repulsion of cells"/>
</dbReference>
<dbReference type="Reactome" id="R-RNO-9009391">
    <property type="pathway name" value="Extra-nuclear estrogen signaling"/>
</dbReference>
<dbReference type="PRO" id="PR:P33436"/>
<dbReference type="Proteomes" id="UP000002494">
    <property type="component" value="Chromosome 19"/>
</dbReference>
<dbReference type="GO" id="GO:0031012">
    <property type="term" value="C:extracellular matrix"/>
    <property type="evidence" value="ECO:0007669"/>
    <property type="project" value="InterPro"/>
</dbReference>
<dbReference type="GO" id="GO:0005615">
    <property type="term" value="C:extracellular space"/>
    <property type="evidence" value="ECO:0000314"/>
    <property type="project" value="RGD"/>
</dbReference>
<dbReference type="GO" id="GO:0005634">
    <property type="term" value="C:nucleus"/>
    <property type="evidence" value="ECO:0007669"/>
    <property type="project" value="UniProtKB-SubCell"/>
</dbReference>
<dbReference type="GO" id="GO:0005886">
    <property type="term" value="C:plasma membrane"/>
    <property type="evidence" value="ECO:0000266"/>
    <property type="project" value="RGD"/>
</dbReference>
<dbReference type="GO" id="GO:0030017">
    <property type="term" value="C:sarcomere"/>
    <property type="evidence" value="ECO:0000266"/>
    <property type="project" value="RGD"/>
</dbReference>
<dbReference type="GO" id="GO:0004175">
    <property type="term" value="F:endopeptidase activity"/>
    <property type="evidence" value="ECO:0000266"/>
    <property type="project" value="RGD"/>
</dbReference>
<dbReference type="GO" id="GO:0001968">
    <property type="term" value="F:fibronectin binding"/>
    <property type="evidence" value="ECO:0000353"/>
    <property type="project" value="RGD"/>
</dbReference>
<dbReference type="GO" id="GO:0004222">
    <property type="term" value="F:metalloendopeptidase activity"/>
    <property type="evidence" value="ECO:0000266"/>
    <property type="project" value="RGD"/>
</dbReference>
<dbReference type="GO" id="GO:0008237">
    <property type="term" value="F:metallopeptidase activity"/>
    <property type="evidence" value="ECO:0000266"/>
    <property type="project" value="RGD"/>
</dbReference>
<dbReference type="GO" id="GO:0008233">
    <property type="term" value="F:peptidase activity"/>
    <property type="evidence" value="ECO:0000314"/>
    <property type="project" value="RGD"/>
</dbReference>
<dbReference type="GO" id="GO:0004252">
    <property type="term" value="F:serine-type endopeptidase activity"/>
    <property type="evidence" value="ECO:0000266"/>
    <property type="project" value="RGD"/>
</dbReference>
<dbReference type="GO" id="GO:0008270">
    <property type="term" value="F:zinc ion binding"/>
    <property type="evidence" value="ECO:0007669"/>
    <property type="project" value="InterPro"/>
</dbReference>
<dbReference type="GO" id="GO:0001525">
    <property type="term" value="P:angiogenesis"/>
    <property type="evidence" value="ECO:0000270"/>
    <property type="project" value="RGD"/>
</dbReference>
<dbReference type="GO" id="GO:0001955">
    <property type="term" value="P:blood vessel maturation"/>
    <property type="evidence" value="ECO:0000266"/>
    <property type="project" value="RGD"/>
</dbReference>
<dbReference type="GO" id="GO:0060346">
    <property type="term" value="P:bone trabecula formation"/>
    <property type="evidence" value="ECO:0000266"/>
    <property type="project" value="RGD"/>
</dbReference>
<dbReference type="GO" id="GO:0016477">
    <property type="term" value="P:cell migration"/>
    <property type="evidence" value="ECO:0000315"/>
    <property type="project" value="RGD"/>
</dbReference>
<dbReference type="GO" id="GO:0071230">
    <property type="term" value="P:cellular response to amino acid stimulus"/>
    <property type="evidence" value="ECO:0000266"/>
    <property type="project" value="RGD"/>
</dbReference>
<dbReference type="GO" id="GO:0071345">
    <property type="term" value="P:cellular response to cytokine stimulus"/>
    <property type="evidence" value="ECO:0000270"/>
    <property type="project" value="RGD"/>
</dbReference>
<dbReference type="GO" id="GO:0071392">
    <property type="term" value="P:cellular response to estradiol stimulus"/>
    <property type="evidence" value="ECO:0000315"/>
    <property type="project" value="RGD"/>
</dbReference>
<dbReference type="GO" id="GO:0071498">
    <property type="term" value="P:cellular response to fluid shear stress"/>
    <property type="evidence" value="ECO:0000270"/>
    <property type="project" value="RGD"/>
</dbReference>
<dbReference type="GO" id="GO:0071347">
    <property type="term" value="P:cellular response to interleukin-1"/>
    <property type="evidence" value="ECO:0000270"/>
    <property type="project" value="RGD"/>
</dbReference>
<dbReference type="GO" id="GO:0034614">
    <property type="term" value="P:cellular response to reactive oxygen species"/>
    <property type="evidence" value="ECO:0000266"/>
    <property type="project" value="RGD"/>
</dbReference>
<dbReference type="GO" id="GO:0071492">
    <property type="term" value="P:cellular response to UV-A"/>
    <property type="evidence" value="ECO:0000250"/>
    <property type="project" value="UniProtKB"/>
</dbReference>
<dbReference type="GO" id="GO:0030574">
    <property type="term" value="P:collagen catabolic process"/>
    <property type="evidence" value="ECO:0000314"/>
    <property type="project" value="RGD"/>
</dbReference>
<dbReference type="GO" id="GO:0007566">
    <property type="term" value="P:embryo implantation"/>
    <property type="evidence" value="ECO:0000266"/>
    <property type="project" value="RGD"/>
</dbReference>
<dbReference type="GO" id="GO:0035987">
    <property type="term" value="P:endodermal cell differentiation"/>
    <property type="evidence" value="ECO:0000266"/>
    <property type="project" value="RGD"/>
</dbReference>
<dbReference type="GO" id="GO:0030198">
    <property type="term" value="P:extracellular matrix organization"/>
    <property type="evidence" value="ECO:0000318"/>
    <property type="project" value="GO_Central"/>
</dbReference>
<dbReference type="GO" id="GO:0060325">
    <property type="term" value="P:face morphogenesis"/>
    <property type="evidence" value="ECO:0000266"/>
    <property type="project" value="RGD"/>
</dbReference>
<dbReference type="GO" id="GO:0007565">
    <property type="term" value="P:female pregnancy"/>
    <property type="evidence" value="ECO:0000270"/>
    <property type="project" value="RGD"/>
</dbReference>
<dbReference type="GO" id="GO:0007507">
    <property type="term" value="P:heart development"/>
    <property type="evidence" value="ECO:0000314"/>
    <property type="project" value="RGD"/>
</dbReference>
<dbReference type="GO" id="GO:0001957">
    <property type="term" value="P:intramembranous ossification"/>
    <property type="evidence" value="ECO:0000266"/>
    <property type="project" value="RGD"/>
</dbReference>
<dbReference type="GO" id="GO:0001553">
    <property type="term" value="P:luteinization"/>
    <property type="evidence" value="ECO:0000270"/>
    <property type="project" value="RGD"/>
</dbReference>
<dbReference type="GO" id="GO:0048246">
    <property type="term" value="P:macrophage chemotaxis"/>
    <property type="evidence" value="ECO:0000314"/>
    <property type="project" value="RGD"/>
</dbReference>
<dbReference type="GO" id="GO:0007162">
    <property type="term" value="P:negative regulation of cell adhesion"/>
    <property type="evidence" value="ECO:0000314"/>
    <property type="project" value="RGD"/>
</dbReference>
<dbReference type="GO" id="GO:0045906">
    <property type="term" value="P:negative regulation of vasoconstriction"/>
    <property type="evidence" value="ECO:0000314"/>
    <property type="project" value="RGD"/>
</dbReference>
<dbReference type="GO" id="GO:0001541">
    <property type="term" value="P:ovarian follicle development"/>
    <property type="evidence" value="ECO:0000314"/>
    <property type="project" value="RGD"/>
</dbReference>
<dbReference type="GO" id="GO:0001542">
    <property type="term" value="P:ovulation from ovarian follicle"/>
    <property type="evidence" value="ECO:0000270"/>
    <property type="project" value="RGD"/>
</dbReference>
<dbReference type="GO" id="GO:0007567">
    <property type="term" value="P:parturition"/>
    <property type="evidence" value="ECO:0000270"/>
    <property type="project" value="RGD"/>
</dbReference>
<dbReference type="GO" id="GO:0014012">
    <property type="term" value="P:peripheral nervous system axon regeneration"/>
    <property type="evidence" value="ECO:0000314"/>
    <property type="project" value="RGD"/>
</dbReference>
<dbReference type="GO" id="GO:0043065">
    <property type="term" value="P:positive regulation of apoptotic process"/>
    <property type="evidence" value="ECO:0000314"/>
    <property type="project" value="RGD"/>
</dbReference>
<dbReference type="GO" id="GO:0030335">
    <property type="term" value="P:positive regulation of cell migration"/>
    <property type="evidence" value="ECO:0000315"/>
    <property type="project" value="RGD"/>
</dbReference>
<dbReference type="GO" id="GO:1903378">
    <property type="term" value="P:positive regulation of oxidative stress-induced neuron intrinsic apoptotic signaling pathway"/>
    <property type="evidence" value="ECO:0000315"/>
    <property type="project" value="RGD"/>
</dbReference>
<dbReference type="GO" id="GO:0048661">
    <property type="term" value="P:positive regulation of smooth muscle cell proliferation"/>
    <property type="evidence" value="ECO:0000266"/>
    <property type="project" value="RGD"/>
</dbReference>
<dbReference type="GO" id="GO:1904707">
    <property type="term" value="P:positive regulation of vascular associated smooth muscle cell proliferation"/>
    <property type="evidence" value="ECO:0000266"/>
    <property type="project" value="RGD"/>
</dbReference>
<dbReference type="GO" id="GO:0060740">
    <property type="term" value="P:prostate gland epithelium morphogenesis"/>
    <property type="evidence" value="ECO:0000315"/>
    <property type="project" value="RGD"/>
</dbReference>
<dbReference type="GO" id="GO:0030163">
    <property type="term" value="P:protein catabolic process"/>
    <property type="evidence" value="ECO:0000314"/>
    <property type="project" value="RGD"/>
</dbReference>
<dbReference type="GO" id="GO:0006508">
    <property type="term" value="P:proteolysis"/>
    <property type="evidence" value="ECO:0000314"/>
    <property type="project" value="RGD"/>
</dbReference>
<dbReference type="GO" id="GO:0014823">
    <property type="term" value="P:response to activity"/>
    <property type="evidence" value="ECO:0000270"/>
    <property type="project" value="RGD"/>
</dbReference>
<dbReference type="GO" id="GO:1904645">
    <property type="term" value="P:response to amyloid-beta"/>
    <property type="evidence" value="ECO:0000266"/>
    <property type="project" value="RGD"/>
</dbReference>
<dbReference type="GO" id="GO:0034097">
    <property type="term" value="P:response to cytokine"/>
    <property type="evidence" value="ECO:0000270"/>
    <property type="project" value="RGD"/>
</dbReference>
<dbReference type="GO" id="GO:0051602">
    <property type="term" value="P:response to electrical stimulus"/>
    <property type="evidence" value="ECO:0000270"/>
    <property type="project" value="RGD"/>
</dbReference>
<dbReference type="GO" id="GO:0043627">
    <property type="term" value="P:response to estrogen"/>
    <property type="evidence" value="ECO:0000314"/>
    <property type="project" value="RGD"/>
</dbReference>
<dbReference type="GO" id="GO:0042542">
    <property type="term" value="P:response to hydrogen peroxide"/>
    <property type="evidence" value="ECO:0000314"/>
    <property type="project" value="RGD"/>
</dbReference>
<dbReference type="GO" id="GO:0055093">
    <property type="term" value="P:response to hyperoxia"/>
    <property type="evidence" value="ECO:0000270"/>
    <property type="project" value="RGD"/>
</dbReference>
<dbReference type="GO" id="GO:0001666">
    <property type="term" value="P:response to hypoxia"/>
    <property type="evidence" value="ECO:0000314"/>
    <property type="project" value="RGD"/>
</dbReference>
<dbReference type="GO" id="GO:0009612">
    <property type="term" value="P:response to mechanical stimulus"/>
    <property type="evidence" value="ECO:0000314"/>
    <property type="project" value="RGD"/>
</dbReference>
<dbReference type="GO" id="GO:0035094">
    <property type="term" value="P:response to nicotine"/>
    <property type="evidence" value="ECO:0000270"/>
    <property type="project" value="RGD"/>
</dbReference>
<dbReference type="GO" id="GO:0006979">
    <property type="term" value="P:response to oxidative stress"/>
    <property type="evidence" value="ECO:0000314"/>
    <property type="project" value="RGD"/>
</dbReference>
<dbReference type="GO" id="GO:0032526">
    <property type="term" value="P:response to retinoic acid"/>
    <property type="evidence" value="ECO:0000270"/>
    <property type="project" value="RGD"/>
</dbReference>
<dbReference type="GO" id="GO:0009410">
    <property type="term" value="P:response to xenobiotic stimulus"/>
    <property type="evidence" value="ECO:0000314"/>
    <property type="project" value="RGD"/>
</dbReference>
<dbReference type="GO" id="GO:0048705">
    <property type="term" value="P:skeletal system morphogenesis"/>
    <property type="evidence" value="ECO:0000266"/>
    <property type="project" value="RGD"/>
</dbReference>
<dbReference type="GO" id="GO:0048771">
    <property type="term" value="P:tissue remodeling"/>
    <property type="evidence" value="ECO:0000314"/>
    <property type="project" value="RGD"/>
</dbReference>
<dbReference type="GO" id="GO:0061450">
    <property type="term" value="P:trophoblast cell migration"/>
    <property type="evidence" value="ECO:0000266"/>
    <property type="project" value="RGD"/>
</dbReference>
<dbReference type="CDD" id="cd00062">
    <property type="entry name" value="FN2"/>
    <property type="match status" value="3"/>
</dbReference>
<dbReference type="CDD" id="cd00094">
    <property type="entry name" value="HX"/>
    <property type="match status" value="1"/>
</dbReference>
<dbReference type="CDD" id="cd04278">
    <property type="entry name" value="ZnMc_MMP"/>
    <property type="match status" value="1"/>
</dbReference>
<dbReference type="FunFam" id="2.10.10.10:FF:000002">
    <property type="entry name" value="72 kDa type IV collagenase"/>
    <property type="match status" value="1"/>
</dbReference>
<dbReference type="FunFam" id="2.110.10.10:FF:000004">
    <property type="entry name" value="72 kDa type IV collagenase"/>
    <property type="match status" value="1"/>
</dbReference>
<dbReference type="FunFam" id="3.40.390.10:FF:000010">
    <property type="entry name" value="72 kDa type IV collagenase"/>
    <property type="match status" value="1"/>
</dbReference>
<dbReference type="FunFam" id="2.10.10.10:FF:000001">
    <property type="entry name" value="Fibronectin 1a isoform 1"/>
    <property type="match status" value="2"/>
</dbReference>
<dbReference type="Gene3D" id="3.40.390.10">
    <property type="entry name" value="Collagenase (Catalytic Domain)"/>
    <property type="match status" value="2"/>
</dbReference>
<dbReference type="Gene3D" id="2.10.10.10">
    <property type="entry name" value="Fibronectin, type II, collagen-binding"/>
    <property type="match status" value="2"/>
</dbReference>
<dbReference type="Gene3D" id="2.110.10.10">
    <property type="entry name" value="Hemopexin-like domain"/>
    <property type="match status" value="1"/>
</dbReference>
<dbReference type="InterPro" id="IPR000562">
    <property type="entry name" value="FN_type2_dom"/>
</dbReference>
<dbReference type="InterPro" id="IPR036943">
    <property type="entry name" value="FN_type2_sf"/>
</dbReference>
<dbReference type="InterPro" id="IPR000585">
    <property type="entry name" value="Hemopexin-like_dom"/>
</dbReference>
<dbReference type="InterPro" id="IPR036375">
    <property type="entry name" value="Hemopexin-like_dom_sf"/>
</dbReference>
<dbReference type="InterPro" id="IPR018487">
    <property type="entry name" value="Hemopexin-like_repeat"/>
</dbReference>
<dbReference type="InterPro" id="IPR018486">
    <property type="entry name" value="Hemopexin_CS"/>
</dbReference>
<dbReference type="InterPro" id="IPR013806">
    <property type="entry name" value="Kringle-like"/>
</dbReference>
<dbReference type="InterPro" id="IPR033739">
    <property type="entry name" value="M10A_MMP"/>
</dbReference>
<dbReference type="InterPro" id="IPR024079">
    <property type="entry name" value="MetalloPept_cat_dom_sf"/>
</dbReference>
<dbReference type="InterPro" id="IPR001818">
    <property type="entry name" value="Pept_M10_metallopeptidase"/>
</dbReference>
<dbReference type="InterPro" id="IPR021190">
    <property type="entry name" value="Pept_M10A"/>
</dbReference>
<dbReference type="InterPro" id="IPR021158">
    <property type="entry name" value="Pept_M10A_Zn_BS"/>
</dbReference>
<dbReference type="InterPro" id="IPR006026">
    <property type="entry name" value="Peptidase_Metallo"/>
</dbReference>
<dbReference type="InterPro" id="IPR036365">
    <property type="entry name" value="PGBD-like_sf"/>
</dbReference>
<dbReference type="PANTHER" id="PTHR10201:SF29">
    <property type="entry name" value="72 KDA TYPE IV COLLAGENASE"/>
    <property type="match status" value="1"/>
</dbReference>
<dbReference type="PANTHER" id="PTHR10201">
    <property type="entry name" value="MATRIX METALLOPROTEINASE"/>
    <property type="match status" value="1"/>
</dbReference>
<dbReference type="Pfam" id="PF00040">
    <property type="entry name" value="fn2"/>
    <property type="match status" value="3"/>
</dbReference>
<dbReference type="Pfam" id="PF00045">
    <property type="entry name" value="Hemopexin"/>
    <property type="match status" value="4"/>
</dbReference>
<dbReference type="Pfam" id="PF00413">
    <property type="entry name" value="Peptidase_M10"/>
    <property type="match status" value="2"/>
</dbReference>
<dbReference type="PIRSF" id="PIRSF001191">
    <property type="entry name" value="Peptidase_M10A_matrix"/>
    <property type="match status" value="1"/>
</dbReference>
<dbReference type="PRINTS" id="PR00013">
    <property type="entry name" value="FNTYPEII"/>
</dbReference>
<dbReference type="PRINTS" id="PR00138">
    <property type="entry name" value="MATRIXIN"/>
</dbReference>
<dbReference type="SMART" id="SM00059">
    <property type="entry name" value="FN2"/>
    <property type="match status" value="3"/>
</dbReference>
<dbReference type="SMART" id="SM00120">
    <property type="entry name" value="HX"/>
    <property type="match status" value="4"/>
</dbReference>
<dbReference type="SMART" id="SM00235">
    <property type="entry name" value="ZnMc"/>
    <property type="match status" value="1"/>
</dbReference>
<dbReference type="SUPFAM" id="SSF50923">
    <property type="entry name" value="Hemopexin-like domain"/>
    <property type="match status" value="1"/>
</dbReference>
<dbReference type="SUPFAM" id="SSF57440">
    <property type="entry name" value="Kringle-like"/>
    <property type="match status" value="3"/>
</dbReference>
<dbReference type="SUPFAM" id="SSF55486">
    <property type="entry name" value="Metalloproteases ('zincins'), catalytic domain"/>
    <property type="match status" value="1"/>
</dbReference>
<dbReference type="SUPFAM" id="SSF47090">
    <property type="entry name" value="PGBD-like"/>
    <property type="match status" value="1"/>
</dbReference>
<dbReference type="PROSITE" id="PS00546">
    <property type="entry name" value="CYSTEINE_SWITCH"/>
    <property type="match status" value="1"/>
</dbReference>
<dbReference type="PROSITE" id="PS00023">
    <property type="entry name" value="FN2_1"/>
    <property type="match status" value="3"/>
</dbReference>
<dbReference type="PROSITE" id="PS51092">
    <property type="entry name" value="FN2_2"/>
    <property type="match status" value="3"/>
</dbReference>
<dbReference type="PROSITE" id="PS00024">
    <property type="entry name" value="HEMOPEXIN"/>
    <property type="match status" value="1"/>
</dbReference>
<dbReference type="PROSITE" id="PS51642">
    <property type="entry name" value="HEMOPEXIN_2"/>
    <property type="match status" value="4"/>
</dbReference>
<dbReference type="PROSITE" id="PS00142">
    <property type="entry name" value="ZINC_PROTEASE"/>
    <property type="match status" value="1"/>
</dbReference>
<accession>P33436</accession>
<accession>P97581</accession>
<accession>Q6GMM9</accession>
<comment type="function">
    <text evidence="1">Ubiquitinous metalloproteinase that is involved in diverse functions such as remodeling of the vasculature, angiogenesis, tissue repair, tumor invasion, inflammation, and atherosclerotic plaque rupture. As well as degrading extracellular matrix proteins, can also act on several nonmatrix proteins such as big endothelial 1 and beta-type CGRP promoting vasoconstriction. Also cleaves KISS at a Gly-|-Leu bond. Appears to have a role in myocardial cell death pathways. Contributes to myocardial oxidative stress by regulating the activity of GSK3beta. Cleaves GSK3beta in vitro. Involved in the formation of the fibrovascular tissues (By similarity).</text>
</comment>
<comment type="function">
    <text evidence="1">PEX, the C-terminal non-catalytic fragment of MMP2, possesses anti-angiogenic and anti-tumor properties and inhibits cell migration and cell adhesion to FGF2 and vitronectin. Ligand for integrin alpha-v/beta3 on the surface of blood vessels (By similarity).</text>
</comment>
<comment type="catalytic activity">
    <reaction evidence="2">
        <text>Cleavage of gelatin type I and collagen types IV, V, VII, X. Cleaves the collagen-like sequence Pro-Gln-Gly-|-Ile-Ala-Gly-Gln.</text>
        <dbReference type="EC" id="3.4.24.24"/>
    </reaction>
</comment>
<comment type="cofactor">
    <cofactor evidence="2">
        <name>Ca(2+)</name>
        <dbReference type="ChEBI" id="CHEBI:29108"/>
    </cofactor>
    <text evidence="2">Binds 4 Ca(2+) ions per subunit.</text>
</comment>
<comment type="cofactor">
    <cofactor evidence="2">
        <name>Zn(2+)</name>
        <dbReference type="ChEBI" id="CHEBI:29105"/>
    </cofactor>
    <text evidence="2">Binds 2 Zn(2+) ions per subunit.</text>
</comment>
<comment type="subunit">
    <text evidence="1">Interacts (via the C-terminal hemopexin-like domains-containing region) with the integrin alpha-V/beta-3; the interaction promotes vascular invasion in angiogenic vessels and melamoma cells. Interacts (via the C-terminal PEX domain) with TIMP2 (via the C-terminal); the interaction inhibits the degradation activity. Interacts with GSK3B (By similarity).</text>
</comment>
<comment type="subcellular location">
    <subcellularLocation>
        <location evidence="1">Secreted</location>
        <location evidence="1">Extracellular space</location>
        <location evidence="1">Extracellular matrix</location>
    </subcellularLocation>
    <subcellularLocation>
        <location evidence="1">Membrane</location>
    </subcellularLocation>
    <subcellularLocation>
        <location evidence="1">Nucleus</location>
    </subcellularLocation>
    <text evidence="1">Colocalizes with integrin alphaV/beta3 at the membrane surface in angiogenic blood vessels and melanomas. Found in mitochondria, along microfibrils, and in nuclei of cardiomyocytes (By similarity).</text>
</comment>
<comment type="domain">
    <text>The conserved cysteine present in the cysteine-switch motif binds the catalytic zinc ion, thus inhibiting the enzyme. The dissociation of the cysteine from the zinc ion upon the activation-peptide release activates the enzyme.</text>
</comment>
<comment type="PTM">
    <text evidence="1">Phosphorylation on multiple sites modulates enzymatic activity. Phosphorylated by PKC in vitro (By similarity).</text>
</comment>
<comment type="PTM">
    <text evidence="1">The propeptide is processed by MMP14 (MT-MMP1) and MMP16 (MT-MMP3) (By similarity). Autocatalytic cleavage in the C-terminal produces the anti-angiogenic peptide, PEX. This processing appears to be facilitated by binding integrin integrinv/beta3 (By similarity).</text>
</comment>
<comment type="similarity">
    <text evidence="7">Belongs to the peptidase M10A family.</text>
</comment>
<evidence type="ECO:0000250" key="1"/>
<evidence type="ECO:0000250" key="2">
    <source>
        <dbReference type="UniProtKB" id="P08253"/>
    </source>
</evidence>
<evidence type="ECO:0000255" key="3"/>
<evidence type="ECO:0000255" key="4">
    <source>
        <dbReference type="PROSITE-ProRule" id="PRU00479"/>
    </source>
</evidence>
<evidence type="ECO:0000255" key="5">
    <source>
        <dbReference type="PROSITE-ProRule" id="PRU10095"/>
    </source>
</evidence>
<evidence type="ECO:0000269" key="6">
    <source>
    </source>
</evidence>
<evidence type="ECO:0000305" key="7"/>
<gene>
    <name type="primary">Mmp2</name>
</gene>
<reference key="1">
    <citation type="journal article" date="1993" name="Biochem. J.">
        <title>Homology cloning of rat 72 kDa type IV collagenase: cytokine and second-messenger inducibility in glomerular mesangial cells.</title>
        <authorList>
            <person name="Marti H.P."/>
            <person name="McNeil L."/>
            <person name="Davies M."/>
            <person name="Martin J."/>
            <person name="Lovett D.H."/>
        </authorList>
    </citation>
    <scope>NUCLEOTIDE SEQUENCE [MRNA]</scope>
</reference>
<reference key="2">
    <citation type="submission" date="1996-07" db="EMBL/GenBank/DDBJ databases">
        <title>The cloning of the cDNA encoding rat gelatinase A from a rat skin wound cDNA library.</title>
        <authorList>
            <person name="Okada A."/>
            <person name="Basset P."/>
        </authorList>
    </citation>
    <scope>NUCLEOTIDE SEQUENCE [MRNA]</scope>
    <source>
        <strain>Wistar</strain>
        <tissue>Skin</tissue>
    </source>
</reference>
<reference key="3">
    <citation type="journal article" date="2004" name="Genome Res.">
        <title>The status, quality, and expansion of the NIH full-length cDNA project: the Mammalian Gene Collection (MGC).</title>
        <authorList>
            <consortium name="The MGC Project Team"/>
        </authorList>
    </citation>
    <scope>NUCLEOTIDE SEQUENCE [LARGE SCALE MRNA]</scope>
    <source>
        <tissue>Lung</tissue>
    </source>
</reference>
<reference key="4">
    <citation type="journal article" date="2015" name="J. Proteome Res.">
        <title>Peptidomics for studying limited proteolysis.</title>
        <authorList>
            <person name="Tsuchiya T."/>
            <person name="Osaki T."/>
            <person name="Minamino N."/>
            <person name="Sasaki K."/>
        </authorList>
    </citation>
    <scope>CLEAVAGE OF SIGNAL PEPTIDE AFTER ALA-29</scope>
    <scope>IDENTIFICATION BY MASS SPECTROMETRY</scope>
</reference>